<accession>A9FGB5</accession>
<proteinExistence type="inferred from homology"/>
<reference key="1">
    <citation type="journal article" date="2007" name="Nat. Biotechnol.">
        <title>Complete genome sequence of the myxobacterium Sorangium cellulosum.</title>
        <authorList>
            <person name="Schneiker S."/>
            <person name="Perlova O."/>
            <person name="Kaiser O."/>
            <person name="Gerth K."/>
            <person name="Alici A."/>
            <person name="Altmeyer M.O."/>
            <person name="Bartels D."/>
            <person name="Bekel T."/>
            <person name="Beyer S."/>
            <person name="Bode E."/>
            <person name="Bode H.B."/>
            <person name="Bolten C.J."/>
            <person name="Choudhuri J.V."/>
            <person name="Doss S."/>
            <person name="Elnakady Y.A."/>
            <person name="Frank B."/>
            <person name="Gaigalat L."/>
            <person name="Goesmann A."/>
            <person name="Groeger C."/>
            <person name="Gross F."/>
            <person name="Jelsbak L."/>
            <person name="Jelsbak L."/>
            <person name="Kalinowski J."/>
            <person name="Kegler C."/>
            <person name="Knauber T."/>
            <person name="Konietzny S."/>
            <person name="Kopp M."/>
            <person name="Krause L."/>
            <person name="Krug D."/>
            <person name="Linke B."/>
            <person name="Mahmud T."/>
            <person name="Martinez-Arias R."/>
            <person name="McHardy A.C."/>
            <person name="Merai M."/>
            <person name="Meyer F."/>
            <person name="Mormann S."/>
            <person name="Munoz-Dorado J."/>
            <person name="Perez J."/>
            <person name="Pradella S."/>
            <person name="Rachid S."/>
            <person name="Raddatz G."/>
            <person name="Rosenau F."/>
            <person name="Rueckert C."/>
            <person name="Sasse F."/>
            <person name="Scharfe M."/>
            <person name="Schuster S.C."/>
            <person name="Suen G."/>
            <person name="Treuner-Lange A."/>
            <person name="Velicer G.J."/>
            <person name="Vorholter F.-J."/>
            <person name="Weissman K.J."/>
            <person name="Welch R.D."/>
            <person name="Wenzel S.C."/>
            <person name="Whitworth D.E."/>
            <person name="Wilhelm S."/>
            <person name="Wittmann C."/>
            <person name="Bloecker H."/>
            <person name="Puehler A."/>
            <person name="Mueller R."/>
        </authorList>
    </citation>
    <scope>NUCLEOTIDE SEQUENCE [LARGE SCALE GENOMIC DNA]</scope>
    <source>
        <strain>So ce56</strain>
    </source>
</reference>
<dbReference type="EMBL" id="AM746676">
    <property type="protein sequence ID" value="CAN98105.1"/>
    <property type="molecule type" value="Genomic_DNA"/>
</dbReference>
<dbReference type="RefSeq" id="WP_012240544.1">
    <property type="nucleotide sequence ID" value="NC_010162.1"/>
</dbReference>
<dbReference type="SMR" id="A9FGB5"/>
<dbReference type="STRING" id="448385.sce7935"/>
<dbReference type="KEGG" id="scl:sce7935"/>
<dbReference type="eggNOG" id="COG0203">
    <property type="taxonomic scope" value="Bacteria"/>
</dbReference>
<dbReference type="HOGENOM" id="CLU_074407_2_0_7"/>
<dbReference type="OrthoDB" id="9809073at2"/>
<dbReference type="BioCyc" id="SCEL448385:SCE_RS40620-MONOMER"/>
<dbReference type="Proteomes" id="UP000002139">
    <property type="component" value="Chromosome"/>
</dbReference>
<dbReference type="GO" id="GO:0015934">
    <property type="term" value="C:large ribosomal subunit"/>
    <property type="evidence" value="ECO:0007669"/>
    <property type="project" value="TreeGrafter"/>
</dbReference>
<dbReference type="GO" id="GO:0003735">
    <property type="term" value="F:structural constituent of ribosome"/>
    <property type="evidence" value="ECO:0007669"/>
    <property type="project" value="InterPro"/>
</dbReference>
<dbReference type="GO" id="GO:0006412">
    <property type="term" value="P:translation"/>
    <property type="evidence" value="ECO:0007669"/>
    <property type="project" value="UniProtKB-UniRule"/>
</dbReference>
<dbReference type="Gene3D" id="3.90.1030.10">
    <property type="entry name" value="Ribosomal protein L17"/>
    <property type="match status" value="1"/>
</dbReference>
<dbReference type="HAMAP" id="MF_01368">
    <property type="entry name" value="Ribosomal_bL17"/>
    <property type="match status" value="1"/>
</dbReference>
<dbReference type="InterPro" id="IPR000456">
    <property type="entry name" value="Ribosomal_bL17"/>
</dbReference>
<dbReference type="InterPro" id="IPR036373">
    <property type="entry name" value="Ribosomal_bL17_sf"/>
</dbReference>
<dbReference type="NCBIfam" id="TIGR00059">
    <property type="entry name" value="L17"/>
    <property type="match status" value="1"/>
</dbReference>
<dbReference type="PANTHER" id="PTHR14413:SF16">
    <property type="entry name" value="LARGE RIBOSOMAL SUBUNIT PROTEIN BL17M"/>
    <property type="match status" value="1"/>
</dbReference>
<dbReference type="PANTHER" id="PTHR14413">
    <property type="entry name" value="RIBOSOMAL PROTEIN L17"/>
    <property type="match status" value="1"/>
</dbReference>
<dbReference type="Pfam" id="PF01196">
    <property type="entry name" value="Ribosomal_L17"/>
    <property type="match status" value="1"/>
</dbReference>
<dbReference type="SUPFAM" id="SSF64263">
    <property type="entry name" value="Prokaryotic ribosomal protein L17"/>
    <property type="match status" value="1"/>
</dbReference>
<protein>
    <recommendedName>
        <fullName evidence="1">Large ribosomal subunit protein bL17</fullName>
    </recommendedName>
    <alternativeName>
        <fullName evidence="3">50S ribosomal protein L17</fullName>
    </alternativeName>
</protein>
<evidence type="ECO:0000255" key="1">
    <source>
        <dbReference type="HAMAP-Rule" id="MF_01368"/>
    </source>
</evidence>
<evidence type="ECO:0000256" key="2">
    <source>
        <dbReference type="SAM" id="MobiDB-lite"/>
    </source>
</evidence>
<evidence type="ECO:0000305" key="3"/>
<name>RL17_SORC5</name>
<gene>
    <name evidence="1" type="primary">rplQ</name>
    <name type="ordered locus">sce7935</name>
</gene>
<comment type="subunit">
    <text evidence="1">Part of the 50S ribosomal subunit. Contacts protein L32.</text>
</comment>
<comment type="similarity">
    <text evidence="1">Belongs to the bacterial ribosomal protein bL17 family.</text>
</comment>
<feature type="chain" id="PRO_1000087196" description="Large ribosomal subunit protein bL17">
    <location>
        <begin position="1"/>
        <end position="172"/>
    </location>
</feature>
<feature type="region of interest" description="Disordered" evidence="2">
    <location>
        <begin position="153"/>
        <end position="172"/>
    </location>
</feature>
<keyword id="KW-1185">Reference proteome</keyword>
<keyword id="KW-0687">Ribonucleoprotein</keyword>
<keyword id="KW-0689">Ribosomal protein</keyword>
<sequence length="172" mass="18792">MRHKKAGRQFGRDTSSRRAMLRNLTANLITHERIETTDAKAKELRRVAERLITKATRLGKVAYTAHGELSPGDRARRLHAERLVGSYIPRWGVATDGKKVDIIAKVMIDLSKRFEGRPGGYTRIIKLGPRRGDCAQMSLIEFIDAPPVADAPAQAAEPVAAAEPATPATTAG</sequence>
<organism>
    <name type="scientific">Sorangium cellulosum (strain So ce56)</name>
    <name type="common">Polyangium cellulosum (strain So ce56)</name>
    <dbReference type="NCBI Taxonomy" id="448385"/>
    <lineage>
        <taxon>Bacteria</taxon>
        <taxon>Pseudomonadati</taxon>
        <taxon>Myxococcota</taxon>
        <taxon>Polyangia</taxon>
        <taxon>Polyangiales</taxon>
        <taxon>Polyangiaceae</taxon>
        <taxon>Sorangium</taxon>
    </lineage>
</organism>